<proteinExistence type="inferred from homology"/>
<keyword id="KW-0963">Cytoplasm</keyword>
<keyword id="KW-0238">DNA-binding</keyword>
<keyword id="KW-0520">NAD</keyword>
<keyword id="KW-1185">Reference proteome</keyword>
<keyword id="KW-0678">Repressor</keyword>
<keyword id="KW-0804">Transcription</keyword>
<keyword id="KW-0805">Transcription regulation</keyword>
<organism>
    <name type="scientific">Syntrophobacter fumaroxidans (strain DSM 10017 / MPOB)</name>
    <dbReference type="NCBI Taxonomy" id="335543"/>
    <lineage>
        <taxon>Bacteria</taxon>
        <taxon>Pseudomonadati</taxon>
        <taxon>Thermodesulfobacteriota</taxon>
        <taxon>Syntrophobacteria</taxon>
        <taxon>Syntrophobacterales</taxon>
        <taxon>Syntrophobacteraceae</taxon>
        <taxon>Syntrophobacter</taxon>
    </lineage>
</organism>
<evidence type="ECO:0000255" key="1">
    <source>
        <dbReference type="HAMAP-Rule" id="MF_01131"/>
    </source>
</evidence>
<gene>
    <name evidence="1" type="primary">rex</name>
    <name type="ordered locus">Sfum_1603</name>
</gene>
<feature type="chain" id="PRO_1000213643" description="Redox-sensing transcriptional repressor Rex">
    <location>
        <begin position="1"/>
        <end position="210"/>
    </location>
</feature>
<feature type="DNA-binding region" description="H-T-H motif" evidence="1">
    <location>
        <begin position="16"/>
        <end position="55"/>
    </location>
</feature>
<feature type="binding site" evidence="1">
    <location>
        <begin position="90"/>
        <end position="95"/>
    </location>
    <ligand>
        <name>NAD(+)</name>
        <dbReference type="ChEBI" id="CHEBI:57540"/>
    </ligand>
</feature>
<name>REX_SYNFM</name>
<comment type="function">
    <text evidence="1">Modulates transcription in response to changes in cellular NADH/NAD(+) redox state.</text>
</comment>
<comment type="subunit">
    <text evidence="1">Homodimer.</text>
</comment>
<comment type="subcellular location">
    <subcellularLocation>
        <location evidence="1">Cytoplasm</location>
    </subcellularLocation>
</comment>
<comment type="similarity">
    <text evidence="1">Belongs to the transcriptional regulatory Rex family.</text>
</comment>
<protein>
    <recommendedName>
        <fullName evidence="1">Redox-sensing transcriptional repressor Rex</fullName>
    </recommendedName>
</protein>
<reference key="1">
    <citation type="submission" date="2006-10" db="EMBL/GenBank/DDBJ databases">
        <title>Complete sequence of Syntrophobacter fumaroxidans MPOB.</title>
        <authorList>
            <consortium name="US DOE Joint Genome Institute"/>
            <person name="Copeland A."/>
            <person name="Lucas S."/>
            <person name="Lapidus A."/>
            <person name="Barry K."/>
            <person name="Detter J.C."/>
            <person name="Glavina del Rio T."/>
            <person name="Hammon N."/>
            <person name="Israni S."/>
            <person name="Pitluck S."/>
            <person name="Goltsman E.G."/>
            <person name="Martinez M."/>
            <person name="Schmutz J."/>
            <person name="Larimer F."/>
            <person name="Land M."/>
            <person name="Hauser L."/>
            <person name="Kyrpides N."/>
            <person name="Kim E."/>
            <person name="Boone D.R."/>
            <person name="Brockman F."/>
            <person name="Culley D."/>
            <person name="Ferry J."/>
            <person name="Gunsalus R."/>
            <person name="McInerney M.J."/>
            <person name="Morrison M."/>
            <person name="Plugge C."/>
            <person name="Rohlin L."/>
            <person name="Scholten J."/>
            <person name="Sieber J."/>
            <person name="Stams A.J.M."/>
            <person name="Worm P."/>
            <person name="Henstra A.M."/>
            <person name="Richardson P."/>
        </authorList>
    </citation>
    <scope>NUCLEOTIDE SEQUENCE [LARGE SCALE GENOMIC DNA]</scope>
    <source>
        <strain>DSM 10017 / MPOB</strain>
    </source>
</reference>
<sequence>MKFAKIPMATIIRLSIYMRTLQELLEDDVDVISSERLAKQCGVNPAQIRKDLAYFGEFGVRGVGYRVNELVNQIKEILGLNRPWNLAMVGLGNLGSALIRHGNFIKHGYMFTAAFDVDPQKVGKRLPNGLVINHVDELEDVIKEREVHVGIITTPASEAQSVANQLVLAGINGILNFAPVQIQVPDCCHVENVDFTIKLDSIAYHLSFGS</sequence>
<dbReference type="EMBL" id="CP000478">
    <property type="protein sequence ID" value="ABK17290.1"/>
    <property type="molecule type" value="Genomic_DNA"/>
</dbReference>
<dbReference type="RefSeq" id="WP_011698460.1">
    <property type="nucleotide sequence ID" value="NC_008554.1"/>
</dbReference>
<dbReference type="SMR" id="A0LIN8"/>
<dbReference type="STRING" id="335543.Sfum_1603"/>
<dbReference type="KEGG" id="sfu:Sfum_1603"/>
<dbReference type="eggNOG" id="COG2344">
    <property type="taxonomic scope" value="Bacteria"/>
</dbReference>
<dbReference type="HOGENOM" id="CLU_061534_0_1_7"/>
<dbReference type="InParanoid" id="A0LIN8"/>
<dbReference type="OrthoDB" id="9784760at2"/>
<dbReference type="Proteomes" id="UP000001784">
    <property type="component" value="Chromosome"/>
</dbReference>
<dbReference type="GO" id="GO:0005737">
    <property type="term" value="C:cytoplasm"/>
    <property type="evidence" value="ECO:0007669"/>
    <property type="project" value="UniProtKB-SubCell"/>
</dbReference>
<dbReference type="GO" id="GO:0003677">
    <property type="term" value="F:DNA binding"/>
    <property type="evidence" value="ECO:0007669"/>
    <property type="project" value="UniProtKB-UniRule"/>
</dbReference>
<dbReference type="GO" id="GO:0003700">
    <property type="term" value="F:DNA-binding transcription factor activity"/>
    <property type="evidence" value="ECO:0007669"/>
    <property type="project" value="UniProtKB-UniRule"/>
</dbReference>
<dbReference type="GO" id="GO:0045892">
    <property type="term" value="P:negative regulation of DNA-templated transcription"/>
    <property type="evidence" value="ECO:0007669"/>
    <property type="project" value="InterPro"/>
</dbReference>
<dbReference type="GO" id="GO:0051775">
    <property type="term" value="P:response to redox state"/>
    <property type="evidence" value="ECO:0007669"/>
    <property type="project" value="InterPro"/>
</dbReference>
<dbReference type="Gene3D" id="3.40.50.720">
    <property type="entry name" value="NAD(P)-binding Rossmann-like Domain"/>
    <property type="match status" value="1"/>
</dbReference>
<dbReference type="Gene3D" id="1.10.10.10">
    <property type="entry name" value="Winged helix-like DNA-binding domain superfamily/Winged helix DNA-binding domain"/>
    <property type="match status" value="1"/>
</dbReference>
<dbReference type="HAMAP" id="MF_01131">
    <property type="entry name" value="Rex"/>
    <property type="match status" value="1"/>
</dbReference>
<dbReference type="InterPro" id="IPR003781">
    <property type="entry name" value="CoA-bd"/>
</dbReference>
<dbReference type="InterPro" id="IPR036291">
    <property type="entry name" value="NAD(P)-bd_dom_sf"/>
</dbReference>
<dbReference type="InterPro" id="IPR009718">
    <property type="entry name" value="Rex_DNA-bd_C_dom"/>
</dbReference>
<dbReference type="InterPro" id="IPR022876">
    <property type="entry name" value="Tscrpt_rep_Rex"/>
</dbReference>
<dbReference type="InterPro" id="IPR036388">
    <property type="entry name" value="WH-like_DNA-bd_sf"/>
</dbReference>
<dbReference type="InterPro" id="IPR036390">
    <property type="entry name" value="WH_DNA-bd_sf"/>
</dbReference>
<dbReference type="NCBIfam" id="NF003989">
    <property type="entry name" value="PRK05472.1-3"/>
    <property type="match status" value="1"/>
</dbReference>
<dbReference type="NCBIfam" id="NF003992">
    <property type="entry name" value="PRK05472.2-1"/>
    <property type="match status" value="1"/>
</dbReference>
<dbReference type="NCBIfam" id="NF003993">
    <property type="entry name" value="PRK05472.2-2"/>
    <property type="match status" value="1"/>
</dbReference>
<dbReference type="NCBIfam" id="NF003994">
    <property type="entry name" value="PRK05472.2-3"/>
    <property type="match status" value="1"/>
</dbReference>
<dbReference type="NCBIfam" id="NF003995">
    <property type="entry name" value="PRK05472.2-4"/>
    <property type="match status" value="1"/>
</dbReference>
<dbReference type="NCBIfam" id="NF003996">
    <property type="entry name" value="PRK05472.2-5"/>
    <property type="match status" value="1"/>
</dbReference>
<dbReference type="PANTHER" id="PTHR35786">
    <property type="entry name" value="REDOX-SENSING TRANSCRIPTIONAL REPRESSOR REX"/>
    <property type="match status" value="1"/>
</dbReference>
<dbReference type="PANTHER" id="PTHR35786:SF1">
    <property type="entry name" value="REDOX-SENSING TRANSCRIPTIONAL REPRESSOR REX 1"/>
    <property type="match status" value="1"/>
</dbReference>
<dbReference type="Pfam" id="PF02629">
    <property type="entry name" value="CoA_binding"/>
    <property type="match status" value="1"/>
</dbReference>
<dbReference type="Pfam" id="PF06971">
    <property type="entry name" value="Put_DNA-bind_N"/>
    <property type="match status" value="1"/>
</dbReference>
<dbReference type="SMART" id="SM00881">
    <property type="entry name" value="CoA_binding"/>
    <property type="match status" value="1"/>
</dbReference>
<dbReference type="SUPFAM" id="SSF51735">
    <property type="entry name" value="NAD(P)-binding Rossmann-fold domains"/>
    <property type="match status" value="1"/>
</dbReference>
<dbReference type="SUPFAM" id="SSF46785">
    <property type="entry name" value="Winged helix' DNA-binding domain"/>
    <property type="match status" value="1"/>
</dbReference>
<accession>A0LIN8</accession>